<organism>
    <name type="scientific">Pseudomonas entomophila (strain L48)</name>
    <dbReference type="NCBI Taxonomy" id="384676"/>
    <lineage>
        <taxon>Bacteria</taxon>
        <taxon>Pseudomonadati</taxon>
        <taxon>Pseudomonadota</taxon>
        <taxon>Gammaproteobacteria</taxon>
        <taxon>Pseudomonadales</taxon>
        <taxon>Pseudomonadaceae</taxon>
        <taxon>Pseudomonas</taxon>
    </lineage>
</organism>
<dbReference type="EMBL" id="CT573326">
    <property type="protein sequence ID" value="CAK17691.1"/>
    <property type="molecule type" value="Genomic_DNA"/>
</dbReference>
<dbReference type="RefSeq" id="WP_011536051.1">
    <property type="nucleotide sequence ID" value="NC_008027.1"/>
</dbReference>
<dbReference type="SMR" id="Q1I3U5"/>
<dbReference type="STRING" id="384676.PSEEN5058"/>
<dbReference type="GeneID" id="32807996"/>
<dbReference type="KEGG" id="pen:PSEEN5058"/>
<dbReference type="eggNOG" id="COG1678">
    <property type="taxonomic scope" value="Bacteria"/>
</dbReference>
<dbReference type="HOGENOM" id="CLU_057596_1_0_6"/>
<dbReference type="OrthoDB" id="9807486at2"/>
<dbReference type="Proteomes" id="UP000000658">
    <property type="component" value="Chromosome"/>
</dbReference>
<dbReference type="GO" id="GO:0005829">
    <property type="term" value="C:cytosol"/>
    <property type="evidence" value="ECO:0007669"/>
    <property type="project" value="TreeGrafter"/>
</dbReference>
<dbReference type="Gene3D" id="3.40.1740.10">
    <property type="entry name" value="VC0467-like"/>
    <property type="match status" value="1"/>
</dbReference>
<dbReference type="HAMAP" id="MF_00758">
    <property type="entry name" value="UPF0301"/>
    <property type="match status" value="1"/>
</dbReference>
<dbReference type="InterPro" id="IPR003774">
    <property type="entry name" value="AlgH-like"/>
</dbReference>
<dbReference type="NCBIfam" id="NF001266">
    <property type="entry name" value="PRK00228.1-1"/>
    <property type="match status" value="1"/>
</dbReference>
<dbReference type="PANTHER" id="PTHR30327">
    <property type="entry name" value="UNCHARACTERIZED PROTEIN YQGE"/>
    <property type="match status" value="1"/>
</dbReference>
<dbReference type="PANTHER" id="PTHR30327:SF1">
    <property type="entry name" value="UPF0301 PROTEIN YQGE"/>
    <property type="match status" value="1"/>
</dbReference>
<dbReference type="Pfam" id="PF02622">
    <property type="entry name" value="DUF179"/>
    <property type="match status" value="1"/>
</dbReference>
<dbReference type="SUPFAM" id="SSF143456">
    <property type="entry name" value="VC0467-like"/>
    <property type="match status" value="1"/>
</dbReference>
<protein>
    <recommendedName>
        <fullName evidence="1">UPF0301 protein PSEEN5058</fullName>
    </recommendedName>
</protein>
<name>Y5058_PSEE4</name>
<proteinExistence type="inferred from homology"/>
<feature type="chain" id="PRO_1000046672" description="UPF0301 protein PSEEN5058">
    <location>
        <begin position="1"/>
        <end position="189"/>
    </location>
</feature>
<comment type="similarity">
    <text evidence="1">Belongs to the UPF0301 (AlgH) family.</text>
</comment>
<accession>Q1I3U5</accession>
<gene>
    <name type="ordered locus">PSEEN5058</name>
</gene>
<evidence type="ECO:0000255" key="1">
    <source>
        <dbReference type="HAMAP-Rule" id="MF_00758"/>
    </source>
</evidence>
<reference key="1">
    <citation type="journal article" date="2006" name="Nat. Biotechnol.">
        <title>Complete genome sequence of the entomopathogenic and metabolically versatile soil bacterium Pseudomonas entomophila.</title>
        <authorList>
            <person name="Vodovar N."/>
            <person name="Vallenet D."/>
            <person name="Cruveiller S."/>
            <person name="Rouy Z."/>
            <person name="Barbe V."/>
            <person name="Acosta C."/>
            <person name="Cattolico L."/>
            <person name="Jubin C."/>
            <person name="Lajus A."/>
            <person name="Segurens B."/>
            <person name="Vacherie B."/>
            <person name="Wincker P."/>
            <person name="Weissenbach J."/>
            <person name="Lemaitre B."/>
            <person name="Medigue C."/>
            <person name="Boccard F."/>
        </authorList>
    </citation>
    <scope>NUCLEOTIDE SEQUENCE [LARGE SCALE GENOMIC DNA]</scope>
    <source>
        <strain>L48</strain>
    </source>
</reference>
<sequence length="189" mass="20175">MKTFAPSYLKHQFLIAMPHMADPNFAHTLTYIVEHNANGAMGLVINRPQELNLADILEQLRPNEQPPASTLQVPIYQGGPVQTDRGFVLHSDECSFQATVALEGLSLTTSQDVLLAIAAGVGPKKSLITLGYAGWEAGQLEAELADNAWLNCPFDPEIIFGLASDQRLGAAAASLGINLSLLTSQAGHA</sequence>